<feature type="chain" id="PRO_0000068708" description="Bifunctional protein GlmU">
    <location>
        <begin position="1"/>
        <end position="450"/>
    </location>
</feature>
<feature type="region of interest" description="Pyrophosphorylase" evidence="1">
    <location>
        <begin position="1"/>
        <end position="229"/>
    </location>
</feature>
<feature type="region of interest" description="Linker" evidence="1">
    <location>
        <begin position="230"/>
        <end position="250"/>
    </location>
</feature>
<feature type="region of interest" description="N-acetyltransferase" evidence="1">
    <location>
        <begin position="251"/>
        <end position="450"/>
    </location>
</feature>
<feature type="active site" description="Proton acceptor" evidence="1">
    <location>
        <position position="362"/>
    </location>
</feature>
<feature type="binding site" evidence="1">
    <location>
        <begin position="8"/>
        <end position="11"/>
    </location>
    <ligand>
        <name>UDP-N-acetyl-alpha-D-glucosamine</name>
        <dbReference type="ChEBI" id="CHEBI:57705"/>
    </ligand>
</feature>
<feature type="binding site" evidence="1">
    <location>
        <position position="22"/>
    </location>
    <ligand>
        <name>UDP-N-acetyl-alpha-D-glucosamine</name>
        <dbReference type="ChEBI" id="CHEBI:57705"/>
    </ligand>
</feature>
<feature type="binding site" evidence="1">
    <location>
        <position position="72"/>
    </location>
    <ligand>
        <name>UDP-N-acetyl-alpha-D-glucosamine</name>
        <dbReference type="ChEBI" id="CHEBI:57705"/>
    </ligand>
</feature>
<feature type="binding site" evidence="1">
    <location>
        <begin position="77"/>
        <end position="78"/>
    </location>
    <ligand>
        <name>UDP-N-acetyl-alpha-D-glucosamine</name>
        <dbReference type="ChEBI" id="CHEBI:57705"/>
    </ligand>
</feature>
<feature type="binding site" evidence="1">
    <location>
        <position position="102"/>
    </location>
    <ligand>
        <name>Mg(2+)</name>
        <dbReference type="ChEBI" id="CHEBI:18420"/>
    </ligand>
</feature>
<feature type="binding site" evidence="1">
    <location>
        <position position="139"/>
    </location>
    <ligand>
        <name>UDP-N-acetyl-alpha-D-glucosamine</name>
        <dbReference type="ChEBI" id="CHEBI:57705"/>
    </ligand>
</feature>
<feature type="binding site" evidence="1">
    <location>
        <position position="154"/>
    </location>
    <ligand>
        <name>UDP-N-acetyl-alpha-D-glucosamine</name>
        <dbReference type="ChEBI" id="CHEBI:57705"/>
    </ligand>
</feature>
<feature type="binding site" evidence="1">
    <location>
        <position position="227"/>
    </location>
    <ligand>
        <name>Mg(2+)</name>
        <dbReference type="ChEBI" id="CHEBI:18420"/>
    </ligand>
</feature>
<feature type="binding site" evidence="1">
    <location>
        <position position="227"/>
    </location>
    <ligand>
        <name>UDP-N-acetyl-alpha-D-glucosamine</name>
        <dbReference type="ChEBI" id="CHEBI:57705"/>
    </ligand>
</feature>
<feature type="binding site" evidence="1">
    <location>
        <position position="332"/>
    </location>
    <ligand>
        <name>UDP-N-acetyl-alpha-D-glucosamine</name>
        <dbReference type="ChEBI" id="CHEBI:57705"/>
    </ligand>
</feature>
<feature type="binding site" evidence="1">
    <location>
        <position position="350"/>
    </location>
    <ligand>
        <name>UDP-N-acetyl-alpha-D-glucosamine</name>
        <dbReference type="ChEBI" id="CHEBI:57705"/>
    </ligand>
</feature>
<feature type="binding site" evidence="1">
    <location>
        <position position="365"/>
    </location>
    <ligand>
        <name>UDP-N-acetyl-alpha-D-glucosamine</name>
        <dbReference type="ChEBI" id="CHEBI:57705"/>
    </ligand>
</feature>
<feature type="binding site" evidence="1">
    <location>
        <position position="376"/>
    </location>
    <ligand>
        <name>UDP-N-acetyl-alpha-D-glucosamine</name>
        <dbReference type="ChEBI" id="CHEBI:57705"/>
    </ligand>
</feature>
<feature type="binding site" evidence="1">
    <location>
        <begin position="385"/>
        <end position="386"/>
    </location>
    <ligand>
        <name>acetyl-CoA</name>
        <dbReference type="ChEBI" id="CHEBI:57288"/>
    </ligand>
</feature>
<feature type="binding site" evidence="1">
    <location>
        <position position="422"/>
    </location>
    <ligand>
        <name>acetyl-CoA</name>
        <dbReference type="ChEBI" id="CHEBI:57288"/>
    </ligand>
</feature>
<feature type="binding site" evidence="1">
    <location>
        <position position="439"/>
    </location>
    <ligand>
        <name>acetyl-CoA</name>
        <dbReference type="ChEBI" id="CHEBI:57288"/>
    </ligand>
</feature>
<protein>
    <recommendedName>
        <fullName evidence="1">Bifunctional protein GlmU</fullName>
    </recommendedName>
    <domain>
        <recommendedName>
            <fullName evidence="1">UDP-N-acetylglucosamine pyrophosphorylase</fullName>
            <ecNumber evidence="1">2.7.7.23</ecNumber>
        </recommendedName>
        <alternativeName>
            <fullName evidence="1">N-acetylglucosamine-1-phosphate uridyltransferase</fullName>
        </alternativeName>
    </domain>
    <domain>
        <recommendedName>
            <fullName evidence="1">Glucosamine-1-phosphate N-acetyltransferase</fullName>
            <ecNumber evidence="1">2.3.1.157</ecNumber>
        </recommendedName>
    </domain>
</protein>
<keyword id="KW-0012">Acyltransferase</keyword>
<keyword id="KW-0133">Cell shape</keyword>
<keyword id="KW-0961">Cell wall biogenesis/degradation</keyword>
<keyword id="KW-0963">Cytoplasm</keyword>
<keyword id="KW-0460">Magnesium</keyword>
<keyword id="KW-0479">Metal-binding</keyword>
<keyword id="KW-0511">Multifunctional enzyme</keyword>
<keyword id="KW-0548">Nucleotidyltransferase</keyword>
<keyword id="KW-0573">Peptidoglycan synthesis</keyword>
<keyword id="KW-0677">Repeat</keyword>
<keyword id="KW-0808">Transferase</keyword>
<sequence length="450" mass="48533">MRRHAIILAAGKGTRMKSKKYKVLHEVAGKPMVEHVLESVKGSGVDQVVTIVGHGAESVKGHLGERSLYSFQEEQLGTAHAVQMAKSHLEDKEGTTIVVCGDTPLITKETLETLIAHHEDANAQATVLSASIQQPYGYGRIVRNASGRLERIVEEKDATQAEKDINEISSGIFAFNNKTLFEKLTQVKNDNAQGEYYLPDVLSLILNDGGIVEVYRTNDVEEIMGVNDRVMLSQAEKAMQRRTNHYHMLNGVTIIDPDSTYIGPDVTIGSDTVIEPGVRINGRTEIGEDVVIGQYSEINNSTIENGACIQQSVVNDASVGANTKVGPFAQLRPGAQLGADVKVGNFVEIKKADLKDGAKVSHLSYIGDAVIGERTNIGCGTITVNYDGENKFKTIVGKDSFVGCNVNLVAPVTIGDDVLVAAGSTITDDVPNDSLAVARARQTTKEGYRK</sequence>
<name>GLMU_STAAC</name>
<evidence type="ECO:0000255" key="1">
    <source>
        <dbReference type="HAMAP-Rule" id="MF_01631"/>
    </source>
</evidence>
<proteinExistence type="inferred from homology"/>
<dbReference type="EC" id="2.7.7.23" evidence="1"/>
<dbReference type="EC" id="2.3.1.157" evidence="1"/>
<dbReference type="EMBL" id="CP000046">
    <property type="protein sequence ID" value="AAW36320.1"/>
    <property type="molecule type" value="Genomic_DNA"/>
</dbReference>
<dbReference type="RefSeq" id="WP_001252529.1">
    <property type="nucleotide sequence ID" value="NZ_JBGOFO010000012.1"/>
</dbReference>
<dbReference type="SMR" id="Q5HIH6"/>
<dbReference type="BindingDB" id="Q5HIH6"/>
<dbReference type="KEGG" id="sac:SACOL0543"/>
<dbReference type="HOGENOM" id="CLU_029499_15_2_9"/>
<dbReference type="UniPathway" id="UPA00113">
    <property type="reaction ID" value="UER00532"/>
</dbReference>
<dbReference type="UniPathway" id="UPA00113">
    <property type="reaction ID" value="UER00533"/>
</dbReference>
<dbReference type="UniPathway" id="UPA00973"/>
<dbReference type="Proteomes" id="UP000000530">
    <property type="component" value="Chromosome"/>
</dbReference>
<dbReference type="GO" id="GO:0005737">
    <property type="term" value="C:cytoplasm"/>
    <property type="evidence" value="ECO:0007669"/>
    <property type="project" value="UniProtKB-SubCell"/>
</dbReference>
<dbReference type="GO" id="GO:0016020">
    <property type="term" value="C:membrane"/>
    <property type="evidence" value="ECO:0007669"/>
    <property type="project" value="GOC"/>
</dbReference>
<dbReference type="GO" id="GO:0019134">
    <property type="term" value="F:glucosamine-1-phosphate N-acetyltransferase activity"/>
    <property type="evidence" value="ECO:0007669"/>
    <property type="project" value="UniProtKB-UniRule"/>
</dbReference>
<dbReference type="GO" id="GO:0000287">
    <property type="term" value="F:magnesium ion binding"/>
    <property type="evidence" value="ECO:0007669"/>
    <property type="project" value="UniProtKB-UniRule"/>
</dbReference>
<dbReference type="GO" id="GO:0003977">
    <property type="term" value="F:UDP-N-acetylglucosamine diphosphorylase activity"/>
    <property type="evidence" value="ECO:0007669"/>
    <property type="project" value="UniProtKB-UniRule"/>
</dbReference>
<dbReference type="GO" id="GO:0000902">
    <property type="term" value="P:cell morphogenesis"/>
    <property type="evidence" value="ECO:0007669"/>
    <property type="project" value="UniProtKB-UniRule"/>
</dbReference>
<dbReference type="GO" id="GO:0071555">
    <property type="term" value="P:cell wall organization"/>
    <property type="evidence" value="ECO:0007669"/>
    <property type="project" value="UniProtKB-KW"/>
</dbReference>
<dbReference type="GO" id="GO:0009245">
    <property type="term" value="P:lipid A biosynthetic process"/>
    <property type="evidence" value="ECO:0007669"/>
    <property type="project" value="UniProtKB-UniRule"/>
</dbReference>
<dbReference type="GO" id="GO:0009252">
    <property type="term" value="P:peptidoglycan biosynthetic process"/>
    <property type="evidence" value="ECO:0007669"/>
    <property type="project" value="UniProtKB-UniRule"/>
</dbReference>
<dbReference type="GO" id="GO:0008360">
    <property type="term" value="P:regulation of cell shape"/>
    <property type="evidence" value="ECO:0007669"/>
    <property type="project" value="UniProtKB-KW"/>
</dbReference>
<dbReference type="GO" id="GO:0006048">
    <property type="term" value="P:UDP-N-acetylglucosamine biosynthetic process"/>
    <property type="evidence" value="ECO:0007669"/>
    <property type="project" value="UniProtKB-UniPathway"/>
</dbReference>
<dbReference type="CDD" id="cd02540">
    <property type="entry name" value="GT2_GlmU_N_bac"/>
    <property type="match status" value="1"/>
</dbReference>
<dbReference type="CDD" id="cd03353">
    <property type="entry name" value="LbH_GlmU_C"/>
    <property type="match status" value="1"/>
</dbReference>
<dbReference type="Gene3D" id="2.160.10.10">
    <property type="entry name" value="Hexapeptide repeat proteins"/>
    <property type="match status" value="1"/>
</dbReference>
<dbReference type="Gene3D" id="3.90.550.10">
    <property type="entry name" value="Spore Coat Polysaccharide Biosynthesis Protein SpsA, Chain A"/>
    <property type="match status" value="1"/>
</dbReference>
<dbReference type="HAMAP" id="MF_01631">
    <property type="entry name" value="GlmU"/>
    <property type="match status" value="1"/>
</dbReference>
<dbReference type="InterPro" id="IPR005882">
    <property type="entry name" value="Bifunctional_GlmU"/>
</dbReference>
<dbReference type="InterPro" id="IPR050065">
    <property type="entry name" value="GlmU-like"/>
</dbReference>
<dbReference type="InterPro" id="IPR038009">
    <property type="entry name" value="GlmU_C_LbH"/>
</dbReference>
<dbReference type="InterPro" id="IPR001451">
    <property type="entry name" value="Hexapep"/>
</dbReference>
<dbReference type="InterPro" id="IPR018357">
    <property type="entry name" value="Hexapep_transf_CS"/>
</dbReference>
<dbReference type="InterPro" id="IPR005835">
    <property type="entry name" value="NTP_transferase_dom"/>
</dbReference>
<dbReference type="InterPro" id="IPR029044">
    <property type="entry name" value="Nucleotide-diphossugar_trans"/>
</dbReference>
<dbReference type="InterPro" id="IPR011004">
    <property type="entry name" value="Trimer_LpxA-like_sf"/>
</dbReference>
<dbReference type="NCBIfam" id="TIGR01173">
    <property type="entry name" value="glmU"/>
    <property type="match status" value="1"/>
</dbReference>
<dbReference type="NCBIfam" id="NF010934">
    <property type="entry name" value="PRK14354.1"/>
    <property type="match status" value="1"/>
</dbReference>
<dbReference type="PANTHER" id="PTHR43584:SF3">
    <property type="entry name" value="BIFUNCTIONAL PROTEIN GLMU"/>
    <property type="match status" value="1"/>
</dbReference>
<dbReference type="PANTHER" id="PTHR43584">
    <property type="entry name" value="NUCLEOTIDYL TRANSFERASE"/>
    <property type="match status" value="1"/>
</dbReference>
<dbReference type="Pfam" id="PF00132">
    <property type="entry name" value="Hexapep"/>
    <property type="match status" value="2"/>
</dbReference>
<dbReference type="Pfam" id="PF00483">
    <property type="entry name" value="NTP_transferase"/>
    <property type="match status" value="1"/>
</dbReference>
<dbReference type="SUPFAM" id="SSF53448">
    <property type="entry name" value="Nucleotide-diphospho-sugar transferases"/>
    <property type="match status" value="1"/>
</dbReference>
<dbReference type="SUPFAM" id="SSF51161">
    <property type="entry name" value="Trimeric LpxA-like enzymes"/>
    <property type="match status" value="1"/>
</dbReference>
<dbReference type="PROSITE" id="PS00101">
    <property type="entry name" value="HEXAPEP_TRANSFERASES"/>
    <property type="match status" value="1"/>
</dbReference>
<comment type="function">
    <text evidence="1">Catalyzes the last two sequential reactions in the de novo biosynthetic pathway for UDP-N-acetylglucosamine (UDP-GlcNAc). The C-terminal domain catalyzes the transfer of acetyl group from acetyl coenzyme A to glucosamine-1-phosphate (GlcN-1-P) to produce N-acetylglucosamine-1-phosphate (GlcNAc-1-P), which is converted into UDP-GlcNAc by the transfer of uridine 5-monophosphate (from uridine 5-triphosphate), a reaction catalyzed by the N-terminal domain.</text>
</comment>
<comment type="catalytic activity">
    <reaction evidence="1">
        <text>alpha-D-glucosamine 1-phosphate + acetyl-CoA = N-acetyl-alpha-D-glucosamine 1-phosphate + CoA + H(+)</text>
        <dbReference type="Rhea" id="RHEA:13725"/>
        <dbReference type="ChEBI" id="CHEBI:15378"/>
        <dbReference type="ChEBI" id="CHEBI:57287"/>
        <dbReference type="ChEBI" id="CHEBI:57288"/>
        <dbReference type="ChEBI" id="CHEBI:57776"/>
        <dbReference type="ChEBI" id="CHEBI:58516"/>
        <dbReference type="EC" id="2.3.1.157"/>
    </reaction>
</comment>
<comment type="catalytic activity">
    <reaction evidence="1">
        <text>N-acetyl-alpha-D-glucosamine 1-phosphate + UTP + H(+) = UDP-N-acetyl-alpha-D-glucosamine + diphosphate</text>
        <dbReference type="Rhea" id="RHEA:13509"/>
        <dbReference type="ChEBI" id="CHEBI:15378"/>
        <dbReference type="ChEBI" id="CHEBI:33019"/>
        <dbReference type="ChEBI" id="CHEBI:46398"/>
        <dbReference type="ChEBI" id="CHEBI:57705"/>
        <dbReference type="ChEBI" id="CHEBI:57776"/>
        <dbReference type="EC" id="2.7.7.23"/>
    </reaction>
</comment>
<comment type="cofactor">
    <cofactor evidence="1">
        <name>Mg(2+)</name>
        <dbReference type="ChEBI" id="CHEBI:18420"/>
    </cofactor>
    <text evidence="1">Binds 1 Mg(2+) ion per subunit.</text>
</comment>
<comment type="pathway">
    <text evidence="1">Nucleotide-sugar biosynthesis; UDP-N-acetyl-alpha-D-glucosamine biosynthesis; N-acetyl-alpha-D-glucosamine 1-phosphate from alpha-D-glucosamine 6-phosphate (route II): step 2/2.</text>
</comment>
<comment type="pathway">
    <text evidence="1">Nucleotide-sugar biosynthesis; UDP-N-acetyl-alpha-D-glucosamine biosynthesis; UDP-N-acetyl-alpha-D-glucosamine from N-acetyl-alpha-D-glucosamine 1-phosphate: step 1/1.</text>
</comment>
<comment type="pathway">
    <text evidence="1">Bacterial outer membrane biogenesis; LPS lipid A biosynthesis.</text>
</comment>
<comment type="subunit">
    <text evidence="1">Homotrimer.</text>
</comment>
<comment type="subcellular location">
    <subcellularLocation>
        <location evidence="1">Cytoplasm</location>
    </subcellularLocation>
</comment>
<comment type="similarity">
    <text evidence="1">In the N-terminal section; belongs to the N-acetylglucosamine-1-phosphate uridyltransferase family.</text>
</comment>
<comment type="similarity">
    <text evidence="1">In the C-terminal section; belongs to the transferase hexapeptide repeat family.</text>
</comment>
<gene>
    <name evidence="1" type="primary">glmU</name>
    <name type="synonym">gcaD</name>
    <name type="ordered locus">SACOL0543</name>
</gene>
<reference key="1">
    <citation type="journal article" date="2005" name="J. Bacteriol.">
        <title>Insights on evolution of virulence and resistance from the complete genome analysis of an early methicillin-resistant Staphylococcus aureus strain and a biofilm-producing methicillin-resistant Staphylococcus epidermidis strain.</title>
        <authorList>
            <person name="Gill S.R."/>
            <person name="Fouts D.E."/>
            <person name="Archer G.L."/>
            <person name="Mongodin E.F."/>
            <person name="DeBoy R.T."/>
            <person name="Ravel J."/>
            <person name="Paulsen I.T."/>
            <person name="Kolonay J.F."/>
            <person name="Brinkac L.M."/>
            <person name="Beanan M.J."/>
            <person name="Dodson R.J."/>
            <person name="Daugherty S.C."/>
            <person name="Madupu R."/>
            <person name="Angiuoli S.V."/>
            <person name="Durkin A.S."/>
            <person name="Haft D.H."/>
            <person name="Vamathevan J.J."/>
            <person name="Khouri H."/>
            <person name="Utterback T.R."/>
            <person name="Lee C."/>
            <person name="Dimitrov G."/>
            <person name="Jiang L."/>
            <person name="Qin H."/>
            <person name="Weidman J."/>
            <person name="Tran K."/>
            <person name="Kang K.H."/>
            <person name="Hance I.R."/>
            <person name="Nelson K.E."/>
            <person name="Fraser C.M."/>
        </authorList>
    </citation>
    <scope>NUCLEOTIDE SEQUENCE [LARGE SCALE GENOMIC DNA]</scope>
    <source>
        <strain>COL</strain>
    </source>
</reference>
<accession>Q5HIH6</accession>
<organism>
    <name type="scientific">Staphylococcus aureus (strain COL)</name>
    <dbReference type="NCBI Taxonomy" id="93062"/>
    <lineage>
        <taxon>Bacteria</taxon>
        <taxon>Bacillati</taxon>
        <taxon>Bacillota</taxon>
        <taxon>Bacilli</taxon>
        <taxon>Bacillales</taxon>
        <taxon>Staphylococcaceae</taxon>
        <taxon>Staphylococcus</taxon>
    </lineage>
</organism>